<keyword id="KW-0687">Ribonucleoprotein</keyword>
<keyword id="KW-0689">Ribosomal protein</keyword>
<sequence length="85" mass="9494">MKSDIHPKYAAVVFNDLASGTKFLTKSTVSSSKTIEWEDGNTYPVIDVEISSESHPFYTGKQRIMDSAGRVERFNARFKGFGGKK</sequence>
<proteinExistence type="inferred from homology"/>
<evidence type="ECO:0000255" key="1">
    <source>
        <dbReference type="HAMAP-Rule" id="MF_00502"/>
    </source>
</evidence>
<evidence type="ECO:0000305" key="2"/>
<accession>B8H7S3</accession>
<reference key="1">
    <citation type="submission" date="2009-01" db="EMBL/GenBank/DDBJ databases">
        <title>Complete sequence of chromosome of Arthrobacter chlorophenolicus A6.</title>
        <authorList>
            <consortium name="US DOE Joint Genome Institute"/>
            <person name="Lucas S."/>
            <person name="Copeland A."/>
            <person name="Lapidus A."/>
            <person name="Glavina del Rio T."/>
            <person name="Tice H."/>
            <person name="Bruce D."/>
            <person name="Goodwin L."/>
            <person name="Pitluck S."/>
            <person name="Goltsman E."/>
            <person name="Clum A."/>
            <person name="Larimer F."/>
            <person name="Land M."/>
            <person name="Hauser L."/>
            <person name="Kyrpides N."/>
            <person name="Mikhailova N."/>
            <person name="Jansson J."/>
            <person name="Richardson P."/>
        </authorList>
    </citation>
    <scope>NUCLEOTIDE SEQUENCE [LARGE SCALE GENOMIC DNA]</scope>
    <source>
        <strain>ATCC 700700 / DSM 12829 / CIP 107037 / JCM 12360 / KCTC 9906 / NCIMB 13794 / A6</strain>
    </source>
</reference>
<comment type="subunit">
    <text evidence="1">Part of the 50S ribosomal subunit.</text>
</comment>
<comment type="similarity">
    <text evidence="1">Belongs to the bacterial ribosomal protein bL31 family. Type B subfamily.</text>
</comment>
<gene>
    <name evidence="1" type="primary">rpmE2</name>
    <name type="ordered locus">Achl_1878</name>
</gene>
<protein>
    <recommendedName>
        <fullName evidence="1">Large ribosomal subunit protein bL31B</fullName>
    </recommendedName>
    <alternativeName>
        <fullName evidence="2">50S ribosomal protein L31 type B</fullName>
    </alternativeName>
</protein>
<organism>
    <name type="scientific">Pseudarthrobacter chlorophenolicus (strain ATCC 700700 / DSM 12829 / CIP 107037 / JCM 12360 / KCTC 9906 / NCIMB 13794 / A6)</name>
    <name type="common">Arthrobacter chlorophenolicus</name>
    <dbReference type="NCBI Taxonomy" id="452863"/>
    <lineage>
        <taxon>Bacteria</taxon>
        <taxon>Bacillati</taxon>
        <taxon>Actinomycetota</taxon>
        <taxon>Actinomycetes</taxon>
        <taxon>Micrococcales</taxon>
        <taxon>Micrococcaceae</taxon>
        <taxon>Pseudarthrobacter</taxon>
    </lineage>
</organism>
<name>RL31B_PSECP</name>
<dbReference type="EMBL" id="CP001341">
    <property type="protein sequence ID" value="ACL39853.1"/>
    <property type="molecule type" value="Genomic_DNA"/>
</dbReference>
<dbReference type="RefSeq" id="WP_015937073.1">
    <property type="nucleotide sequence ID" value="NC_011886.1"/>
</dbReference>
<dbReference type="SMR" id="B8H7S3"/>
<dbReference type="STRING" id="452863.Achl_1878"/>
<dbReference type="KEGG" id="ach:Achl_1878"/>
<dbReference type="eggNOG" id="COG0254">
    <property type="taxonomic scope" value="Bacteria"/>
</dbReference>
<dbReference type="HOGENOM" id="CLU_114306_2_2_11"/>
<dbReference type="OrthoDB" id="9803251at2"/>
<dbReference type="Proteomes" id="UP000002505">
    <property type="component" value="Chromosome"/>
</dbReference>
<dbReference type="GO" id="GO:1990904">
    <property type="term" value="C:ribonucleoprotein complex"/>
    <property type="evidence" value="ECO:0007669"/>
    <property type="project" value="UniProtKB-KW"/>
</dbReference>
<dbReference type="GO" id="GO:0005840">
    <property type="term" value="C:ribosome"/>
    <property type="evidence" value="ECO:0007669"/>
    <property type="project" value="UniProtKB-KW"/>
</dbReference>
<dbReference type="GO" id="GO:0003735">
    <property type="term" value="F:structural constituent of ribosome"/>
    <property type="evidence" value="ECO:0007669"/>
    <property type="project" value="InterPro"/>
</dbReference>
<dbReference type="GO" id="GO:0006412">
    <property type="term" value="P:translation"/>
    <property type="evidence" value="ECO:0007669"/>
    <property type="project" value="UniProtKB-UniRule"/>
</dbReference>
<dbReference type="Gene3D" id="4.10.830.30">
    <property type="entry name" value="Ribosomal protein L31"/>
    <property type="match status" value="1"/>
</dbReference>
<dbReference type="HAMAP" id="MF_00502">
    <property type="entry name" value="Ribosomal_bL31_2"/>
    <property type="match status" value="1"/>
</dbReference>
<dbReference type="InterPro" id="IPR034704">
    <property type="entry name" value="Ribosomal_bL28/bL31-like_sf"/>
</dbReference>
<dbReference type="InterPro" id="IPR002150">
    <property type="entry name" value="Ribosomal_bL31"/>
</dbReference>
<dbReference type="InterPro" id="IPR027493">
    <property type="entry name" value="Ribosomal_bL31_B"/>
</dbReference>
<dbReference type="InterPro" id="IPR042105">
    <property type="entry name" value="Ribosomal_bL31_sf"/>
</dbReference>
<dbReference type="NCBIfam" id="TIGR00105">
    <property type="entry name" value="L31"/>
    <property type="match status" value="1"/>
</dbReference>
<dbReference type="NCBIfam" id="NF002462">
    <property type="entry name" value="PRK01678.1"/>
    <property type="match status" value="1"/>
</dbReference>
<dbReference type="PANTHER" id="PTHR33280">
    <property type="entry name" value="50S RIBOSOMAL PROTEIN L31, CHLOROPLASTIC"/>
    <property type="match status" value="1"/>
</dbReference>
<dbReference type="PANTHER" id="PTHR33280:SF1">
    <property type="entry name" value="LARGE RIBOSOMAL SUBUNIT PROTEIN BL31C"/>
    <property type="match status" value="1"/>
</dbReference>
<dbReference type="Pfam" id="PF01197">
    <property type="entry name" value="Ribosomal_L31"/>
    <property type="match status" value="1"/>
</dbReference>
<dbReference type="PRINTS" id="PR01249">
    <property type="entry name" value="RIBOSOMALL31"/>
</dbReference>
<dbReference type="SUPFAM" id="SSF143800">
    <property type="entry name" value="L28p-like"/>
    <property type="match status" value="1"/>
</dbReference>
<dbReference type="PROSITE" id="PS01143">
    <property type="entry name" value="RIBOSOMAL_L31"/>
    <property type="match status" value="1"/>
</dbReference>
<feature type="chain" id="PRO_1000176979" description="Large ribosomal subunit protein bL31B">
    <location>
        <begin position="1"/>
        <end position="85"/>
    </location>
</feature>